<name>UREF_RHILV</name>
<gene>
    <name evidence="1" type="primary">ureF</name>
</gene>
<feature type="chain" id="PRO_0000344164" description="Urease accessory protein UreF">
    <location>
        <begin position="1"/>
        <end position="223"/>
    </location>
</feature>
<keyword id="KW-0143">Chaperone</keyword>
<keyword id="KW-0963">Cytoplasm</keyword>
<keyword id="KW-0996">Nickel insertion</keyword>
<sequence>MTRDRELQALLRLTAWLSPAFPIGGFAYSGGLERAVADGLVTDAASLAAWIGTLVGNGSAWNDAVLLAESHRQQAQPARLAEVAALAEALAGSRERHQETMLLGEAFLAAARAWPDGVFERLPDKVAYPIAVGAVTGAHGIMPEKALAAFLHAYVSQAVSSGIRLGVAGQRDGLAVLAGLEDHIAEVARRAAASALDDLGSATVQADIASLRHETQATRLFRS</sequence>
<comment type="function">
    <text evidence="1">Required for maturation of urease via the functional incorporation of the urease nickel metallocenter.</text>
</comment>
<comment type="subunit">
    <text evidence="1">UreD, UreF and UreG form a complex that acts as a GTP-hydrolysis-dependent molecular chaperone, activating the urease apoprotein by helping to assemble the nickel containing metallocenter of UreC. The UreE protein probably delivers the nickel.</text>
</comment>
<comment type="subcellular location">
    <subcellularLocation>
        <location evidence="1">Cytoplasm</location>
    </subcellularLocation>
</comment>
<comment type="similarity">
    <text evidence="1">Belongs to the UreF family.</text>
</comment>
<organism>
    <name type="scientific">Rhizobium leguminosarum bv. viciae</name>
    <dbReference type="NCBI Taxonomy" id="387"/>
    <lineage>
        <taxon>Bacteria</taxon>
        <taxon>Pseudomonadati</taxon>
        <taxon>Pseudomonadota</taxon>
        <taxon>Alphaproteobacteria</taxon>
        <taxon>Hyphomicrobiales</taxon>
        <taxon>Rhizobiaceae</taxon>
        <taxon>Rhizobium/Agrobacterium group</taxon>
        <taxon>Rhizobium</taxon>
    </lineage>
</organism>
<dbReference type="EMBL" id="AF347070">
    <property type="protein sequence ID" value="AAL83834.1"/>
    <property type="molecule type" value="Genomic_DNA"/>
</dbReference>
<dbReference type="RefSeq" id="WP_018243281.1">
    <property type="nucleotide sequence ID" value="NZ_WIEI01000025.1"/>
</dbReference>
<dbReference type="SMR" id="Q8RPX8"/>
<dbReference type="GO" id="GO:0005737">
    <property type="term" value="C:cytoplasm"/>
    <property type="evidence" value="ECO:0007669"/>
    <property type="project" value="UniProtKB-SubCell"/>
</dbReference>
<dbReference type="GO" id="GO:0016151">
    <property type="term" value="F:nickel cation binding"/>
    <property type="evidence" value="ECO:0007669"/>
    <property type="project" value="UniProtKB-UniRule"/>
</dbReference>
<dbReference type="Gene3D" id="1.10.4190.10">
    <property type="entry name" value="Urease accessory protein UreF"/>
    <property type="match status" value="1"/>
</dbReference>
<dbReference type="HAMAP" id="MF_01385">
    <property type="entry name" value="UreF"/>
    <property type="match status" value="1"/>
</dbReference>
<dbReference type="InterPro" id="IPR002639">
    <property type="entry name" value="UreF"/>
</dbReference>
<dbReference type="InterPro" id="IPR038277">
    <property type="entry name" value="UreF_sf"/>
</dbReference>
<dbReference type="PANTHER" id="PTHR33620">
    <property type="entry name" value="UREASE ACCESSORY PROTEIN F"/>
    <property type="match status" value="1"/>
</dbReference>
<dbReference type="PANTHER" id="PTHR33620:SF1">
    <property type="entry name" value="UREASE ACCESSORY PROTEIN F"/>
    <property type="match status" value="1"/>
</dbReference>
<dbReference type="Pfam" id="PF01730">
    <property type="entry name" value="UreF"/>
    <property type="match status" value="1"/>
</dbReference>
<dbReference type="PIRSF" id="PIRSF009467">
    <property type="entry name" value="Ureas_acces_UreF"/>
    <property type="match status" value="1"/>
</dbReference>
<evidence type="ECO:0000255" key="1">
    <source>
        <dbReference type="HAMAP-Rule" id="MF_01385"/>
    </source>
</evidence>
<accession>Q8RPX8</accession>
<reference key="1">
    <citation type="journal article" date="2002" name="Arch. Microbiol.">
        <title>Characterization of the urease gene cluster from Rhizobium leguminosarum bv. viciae.</title>
        <authorList>
            <person name="Toffanin A."/>
            <person name="Cadahia E."/>
            <person name="Imperial J."/>
            <person name="Ruiz-Argueso T."/>
            <person name="Palacios M."/>
        </authorList>
    </citation>
    <scope>NUCLEOTIDE SEQUENCE [GENOMIC DNA]</scope>
    <source>
        <strain>UPM791</strain>
    </source>
</reference>
<protein>
    <recommendedName>
        <fullName evidence="1">Urease accessory protein UreF</fullName>
    </recommendedName>
</protein>
<proteinExistence type="inferred from homology"/>